<gene>
    <name type="primary">piaA</name>
    <name type="synonym">amiA</name>
    <name type="synonym">DG1117</name>
    <name type="synonym">pia</name>
    <name type="ORF">DDB_G0277399</name>
</gene>
<accession>O77203</accession>
<accession>Q54ZM8</accession>
<accession>Q76NV6</accession>
<accession>Q7KPC0</accession>
<name>PIAA_DICDI</name>
<organism>
    <name type="scientific">Dictyostelium discoideum</name>
    <name type="common">Social amoeba</name>
    <dbReference type="NCBI Taxonomy" id="44689"/>
    <lineage>
        <taxon>Eukaryota</taxon>
        <taxon>Amoebozoa</taxon>
        <taxon>Evosea</taxon>
        <taxon>Eumycetozoa</taxon>
        <taxon>Dictyostelia</taxon>
        <taxon>Dictyosteliales</taxon>
        <taxon>Dictyosteliaceae</taxon>
        <taxon>Dictyostelium</taxon>
    </lineage>
</organism>
<protein>
    <recommendedName>
        <fullName>Protein pianissimo A</fullName>
    </recommendedName>
    <alternativeName>
        <fullName>Developmental gene 1117 protein</fullName>
    </alternativeName>
    <alternativeName>
        <fullName>Protein pianissimo</fullName>
    </alternativeName>
    <alternativeName>
        <fullName>Target of rapamycin complex 2 subunit piaA</fullName>
        <shortName>TORC2 subunit piaA</shortName>
    </alternativeName>
</protein>
<proteinExistence type="evidence at protein level"/>
<comment type="function">
    <text evidence="2 5 6">Regulates cell growth, chemotaxis, signal relay and the actin cytoskeleton. Required for chemoattractant receptor and G protein-mediated activation of the 12 transmembrane domain adenylyl cyclase. Functions as a part of protein complex TORC2. TORC2, is presumed to be indirectly negatively modulated by rapamycin and regulates actin polarization. TORC2, but not TORC1, negatively regulates phagocytosis. This protein and dagA protein CRAC, a cytosolic regulator, are both essential for activation of the enzyme adenylyl cyclase. This protein and CRAC do not function redundantly. Both proteins are integral components of the adenylyl cyclase activation pathway.</text>
</comment>
<comment type="subunit">
    <text evidence="4">Part of a complex, TORC2, consisting of tor, lst8, piaA and ripA. Additional proteins, such as 14-3-3 and heat-shock proteins, may also belong to the TORC2 complex.</text>
</comment>
<comment type="subcellular location">
    <subcellularLocation>
        <location>Cytoplasm</location>
    </subcellularLocation>
</comment>
<comment type="developmental stage">
    <text evidence="6">Expression peaks between 2.5 and 5 hours of development.</text>
</comment>
<comment type="disruption phenotype">
    <text evidence="2 3 4 5 6 7">Cells are unable to aggregate on bacterial lawns and show impaired chemotaxis, rounded morphology and lack polarity. Phosphorylations of endogenous pkbA/PKB substrates greatly reduced including loss of phosphorylation at 'Thr-470' in endogenous pkgB. In null cells neither chemoattractant stimulation of intact cells nor guanosine gamma thio-phosphate treatment of lysates activates the enzyme adenylyl cyclase. Constitutive expression of piaA reverses these defects. dagA and piaA double mutants require both proteins for reconstitution and activation of adenylyl cyclase. Null cells can respond to exogenous signals by expression of developmental genes necessary for spore formation, although the efficiency of the process is reduced. Null cells possess the machinery to respond to cAMP signals. However, they are unable to aggregate in pure populations suggesting that the defect may be in the production of the cAMP signals.</text>
</comment>
<comment type="similarity">
    <text evidence="8">Belongs to the RICTOR family.</text>
</comment>
<keyword id="KW-0963">Cytoplasm</keyword>
<keyword id="KW-0217">Developmental protein</keyword>
<keyword id="KW-0344">Guanine-nucleotide releasing factor</keyword>
<keyword id="KW-1185">Reference proteome</keyword>
<evidence type="ECO:0000256" key="1">
    <source>
        <dbReference type="SAM" id="MobiDB-lite"/>
    </source>
</evidence>
<evidence type="ECO:0000269" key="2">
    <source>
    </source>
</evidence>
<evidence type="ECO:0000269" key="3">
    <source>
    </source>
</evidence>
<evidence type="ECO:0000269" key="4">
    <source>
    </source>
</evidence>
<evidence type="ECO:0000269" key="5">
    <source>
    </source>
</evidence>
<evidence type="ECO:0000269" key="6">
    <source>
    </source>
</evidence>
<evidence type="ECO:0000269" key="7">
    <source>
    </source>
</evidence>
<evidence type="ECO:0000305" key="8"/>
<sequence length="1148" mass="129529">MTSSDSSVNTTSSSFGNISISSPNHSSSTPPLNNGNGNNVSASETELKKHVLYSLQCLDEKTLTLKVKLDHLNKLVELKKSIPDLNKLGISPTQLYKSVRPFIALPPKTIRTAGLRVMRYYLSNSNNVKELLDLKVQYFITRSLERDKHSEPERIQALKIIRTIMEIDCSLMPHCFVKGLVSIAENQEDNFCRVCLECLTEISIRNPQISSHCGGIRTVFDAVLDPFYQGIQESLLICILYLLSDKDTRIYIRPKSDLEIILAPLTNSFNIGVKLKGASKEKEKEKEKEDEVAMKKWTASSKAVLTLIKSWIGIISLNSDDQGLKSVVDTLRMPQIELQEKALDSIFEIFRVQLPKSIQETFGPQKATQTFNFGSETLQDLPSRTRSLRHNLLNNYLSVLLIAFIDNGLIEGLVYLGNYVANRDGMSEQEKECSKNISLKSTVLLAELLHMSNALLPPSQCAKLQTLPSLVNSAISFRLDPRLRSSSNTMVTNLHSYSHNKSSTTLMDSTLAIGLTGANKWRRIKGQDRRLDKVDDVKMKMEWHMDDNQFQQKIKDTQVLVTKDYQKWSWELMFELLEGPLNNPQHLSNTLKTKFIKRILSFLRPNKKLFSTMAWTTENLKYVRTACVALEVLISHEIGFDFLKDNKTIIQIADMLKVELDYNIKPPPSSSSSSENKKDNVRLLNPEKVLKTMSREYFTMLGTLSSNLLGLEILARNNIFDYIKPLAELPGRDDLSHLIMTSLDYNVNGASRTILQKILTSSSRVVRYLATKYLRFLLRSGVQDFSNWGVELLVQQLNDVDAKVSALSLNVLDEACDDPSCLEVLIDLKPNLLKLGKPGKSLLLRFLSSPKGLENLLQNNGFVEQEEQLWITSENATYVNAIESAVSESLSPSVWRFKEAPDGSSTSGVYLPPHFFGELAKTEKGCQLIRKSNNYQRFLKIIQDPTAKQLDKRASLIAIGHIGSSVDGYSFVKESDTIKLLIGIAEKSQCLALRSTCFYALGMISCIEEAQPIFNSFGWESPSDLNSRILLPKDLKNSTFLSVPQYQYQGSWADHSFETLPSNHFSDPIKNEIISFVGNLSSHITAEGASKNLKRLKIKYPDHFATSEILNAVFILLNTFKYRLGARRFIYDLFDVAIFSSDPYHDLN</sequence>
<feature type="chain" id="PRO_0000377480" description="Protein pianissimo A">
    <location>
        <begin position="1"/>
        <end position="1148"/>
    </location>
</feature>
<feature type="domain" description="N-terminal Ras-GEF">
    <location>
        <begin position="803"/>
        <end position="914"/>
    </location>
</feature>
<feature type="region of interest" description="Disordered" evidence="1">
    <location>
        <begin position="1"/>
        <end position="41"/>
    </location>
</feature>
<feature type="compositionally biased region" description="Low complexity" evidence="1">
    <location>
        <begin position="1"/>
        <end position="34"/>
    </location>
</feature>
<feature type="mutagenesis site" description="Temperature-sensitive phenotype and defective G protein-linked adenylyl cyclase activation." evidence="3">
    <original>G</original>
    <variation>D</variation>
    <location>
        <position position="917"/>
    </location>
</feature>
<reference key="1">
    <citation type="journal article" date="1997" name="Genes Dev.">
        <title>A novel cytosolic regulator, Pianissimo, is required for chemoattractant receptor and G protein-mediated activation of the 12 transmembrane domain adenylyl cyclase in Dictyostelium.</title>
        <authorList>
            <person name="Chen M.-Y."/>
            <person name="Long Y."/>
            <person name="Devreotes P.N."/>
        </authorList>
    </citation>
    <scope>NUCLEOTIDE SEQUENCE [MRNA]</scope>
    <scope>FUNCTION</scope>
    <scope>DISRUPTION PHENOTYPE</scope>
    <scope>DEVELOPMENTAL STAGE</scope>
    <source>
        <strain>AX3</strain>
    </source>
</reference>
<reference key="2">
    <citation type="journal article" date="2002" name="Nature">
        <title>Sequence and analysis of chromosome 2 of Dictyostelium discoideum.</title>
        <authorList>
            <person name="Gloeckner G."/>
            <person name="Eichinger L."/>
            <person name="Szafranski K."/>
            <person name="Pachebat J.A."/>
            <person name="Bankier A.T."/>
            <person name="Dear P.H."/>
            <person name="Lehmann R."/>
            <person name="Baumgart C."/>
            <person name="Parra G."/>
            <person name="Abril J.F."/>
            <person name="Guigo R."/>
            <person name="Kumpf K."/>
            <person name="Tunggal B."/>
            <person name="Cox E.C."/>
            <person name="Quail M.A."/>
            <person name="Platzer M."/>
            <person name="Rosenthal A."/>
            <person name="Noegel A.A."/>
        </authorList>
    </citation>
    <scope>NUCLEOTIDE SEQUENCE [LARGE SCALE GENOMIC DNA]</scope>
    <source>
        <strain>AX4</strain>
    </source>
</reference>
<reference key="3">
    <citation type="journal article" date="2005" name="Nature">
        <title>The genome of the social amoeba Dictyostelium discoideum.</title>
        <authorList>
            <person name="Eichinger L."/>
            <person name="Pachebat J.A."/>
            <person name="Gloeckner G."/>
            <person name="Rajandream M.A."/>
            <person name="Sucgang R."/>
            <person name="Berriman M."/>
            <person name="Song J."/>
            <person name="Olsen R."/>
            <person name="Szafranski K."/>
            <person name="Xu Q."/>
            <person name="Tunggal B."/>
            <person name="Kummerfeld S."/>
            <person name="Madera M."/>
            <person name="Konfortov B.A."/>
            <person name="Rivero F."/>
            <person name="Bankier A.T."/>
            <person name="Lehmann R."/>
            <person name="Hamlin N."/>
            <person name="Davies R."/>
            <person name="Gaudet P."/>
            <person name="Fey P."/>
            <person name="Pilcher K."/>
            <person name="Chen G."/>
            <person name="Saunders D."/>
            <person name="Sodergren E.J."/>
            <person name="Davis P."/>
            <person name="Kerhornou A."/>
            <person name="Nie X."/>
            <person name="Hall N."/>
            <person name="Anjard C."/>
            <person name="Hemphill L."/>
            <person name="Bason N."/>
            <person name="Farbrother P."/>
            <person name="Desany B."/>
            <person name="Just E."/>
            <person name="Morio T."/>
            <person name="Rost R."/>
            <person name="Churcher C.M."/>
            <person name="Cooper J."/>
            <person name="Haydock S."/>
            <person name="van Driessche N."/>
            <person name="Cronin A."/>
            <person name="Goodhead I."/>
            <person name="Muzny D.M."/>
            <person name="Mourier T."/>
            <person name="Pain A."/>
            <person name="Lu M."/>
            <person name="Harper D."/>
            <person name="Lindsay R."/>
            <person name="Hauser H."/>
            <person name="James K.D."/>
            <person name="Quiles M."/>
            <person name="Madan Babu M."/>
            <person name="Saito T."/>
            <person name="Buchrieser C."/>
            <person name="Wardroper A."/>
            <person name="Felder M."/>
            <person name="Thangavelu M."/>
            <person name="Johnson D."/>
            <person name="Knights A."/>
            <person name="Loulseged H."/>
            <person name="Mungall K.L."/>
            <person name="Oliver K."/>
            <person name="Price C."/>
            <person name="Quail M.A."/>
            <person name="Urushihara H."/>
            <person name="Hernandez J."/>
            <person name="Rabbinowitsch E."/>
            <person name="Steffen D."/>
            <person name="Sanders M."/>
            <person name="Ma J."/>
            <person name="Kohara Y."/>
            <person name="Sharp S."/>
            <person name="Simmonds M.N."/>
            <person name="Spiegler S."/>
            <person name="Tivey A."/>
            <person name="Sugano S."/>
            <person name="White B."/>
            <person name="Walker D."/>
            <person name="Woodward J.R."/>
            <person name="Winckler T."/>
            <person name="Tanaka Y."/>
            <person name="Shaulsky G."/>
            <person name="Schleicher M."/>
            <person name="Weinstock G.M."/>
            <person name="Rosenthal A."/>
            <person name="Cox E.C."/>
            <person name="Chisholm R.L."/>
            <person name="Gibbs R.A."/>
            <person name="Loomis W.F."/>
            <person name="Platzer M."/>
            <person name="Kay R.R."/>
            <person name="Williams J.G."/>
            <person name="Dear P.H."/>
            <person name="Noegel A.A."/>
            <person name="Barrell B.G."/>
            <person name="Kuspa A."/>
        </authorList>
    </citation>
    <scope>NUCLEOTIDE SEQUENCE [LARGE SCALE GENOMIC DNA]</scope>
    <source>
        <strain>AX4</strain>
    </source>
</reference>
<reference key="4">
    <citation type="submission" date="1998-07" db="EMBL/GenBank/DDBJ databases">
        <title>Dictyostelium discoideum developmental gene DG1117.</title>
        <authorList>
            <person name="Iranfar N."/>
            <person name="Loomis W.F."/>
        </authorList>
    </citation>
    <scope>NUCLEOTIDE SEQUENCE [GENOMIC DNA] OF 472-1148</scope>
    <source>
        <strain>AX4</strain>
    </source>
</reference>
<reference key="5">
    <citation type="journal article" date="1998" name="Biochem. Biophys. Res. Commun.">
        <title>A novel Dictyostelium discoideum gene required for cAMP-dependent cell aggregation.</title>
        <authorList>
            <person name="Nagasaki A."/>
            <person name="Sutoh K."/>
            <person name="Adachi H."/>
            <person name="Sutoh K."/>
        </authorList>
    </citation>
    <scope>DISRUPTION PHENOTYPE</scope>
</reference>
<reference key="6">
    <citation type="journal article" date="2002" name="J. Cell Sci.">
        <title>Genetic and morphological evidence for two parallel pathways of cell-cycle-coupled cytokinesis in Dictyostelium.</title>
        <authorList>
            <person name="Nagasaki A."/>
            <person name="de Hostos E.L."/>
            <person name="Uyeda T.Q."/>
        </authorList>
    </citation>
    <scope>FUNCTION</scope>
    <scope>DISRUPTION PHENOTYPE</scope>
</reference>
<reference key="7">
    <citation type="journal article" date="2002" name="Dev. Biol.">
        <title>Temperature-sensitive inhibition of development in Dictyostelium due to a point mutation in the piaA gene.</title>
        <authorList>
            <person name="Pergolizzi B."/>
            <person name="Peracino B."/>
            <person name="Silverman J."/>
            <person name="Ceccarelli A."/>
            <person name="Noegel A."/>
            <person name="Devreotes P."/>
            <person name="Bozzaro S."/>
        </authorList>
    </citation>
    <scope>DISRUPTION PHENOTYPE</scope>
    <scope>MUTAGENESIS OF GLY-917</scope>
</reference>
<reference key="8">
    <citation type="journal article" date="2005" name="Bioinformatics">
        <title>Microarray phenotyping in Dictyostelium reveals a regulon of chemotaxis genes.</title>
        <authorList>
            <person name="Booth E.O."/>
            <person name="Van Driessche N."/>
            <person name="Zhuchenko O."/>
            <person name="Kuspa A."/>
            <person name="Shaulsky G."/>
        </authorList>
    </citation>
    <scope>IDENTIFICATION</scope>
</reference>
<reference key="9">
    <citation type="journal article" date="2005" name="Mol. Biol. Cell">
        <title>TOR complex 2 integrates cell movement during chemotaxis and signal relay in Dictyostelium.</title>
        <authorList>
            <person name="Lee S."/>
            <person name="Comer F.I."/>
            <person name="Sasaki A."/>
            <person name="McLeod I.X."/>
            <person name="Duong Y."/>
            <person name="Okumura K."/>
            <person name="Yates J.R. III"/>
            <person name="Parent C.A."/>
            <person name="Firtel R.A."/>
        </authorList>
    </citation>
    <scope>DISRUPTION PHENOTYPE</scope>
    <scope>SUBUNIT</scope>
</reference>
<reference key="10">
    <citation type="journal article" date="2007" name="Genome Biol.">
        <title>High-throughput analysis of spatio-temporal dynamics in Dictyostelium.</title>
        <authorList>
            <person name="Sawai S."/>
            <person name="Guan X.-J."/>
            <person name="Kuspa A."/>
            <person name="Cox E.C."/>
        </authorList>
    </citation>
    <scope>IDENTIFICATION</scope>
</reference>
<reference key="11">
    <citation type="journal article" date="2008" name="Curr. Biol.">
        <title>PIP3-independent activation of TorC2 and PKB at the cell's leading edge mediates chemotaxis.</title>
        <authorList>
            <person name="Kamimura Y."/>
            <person name="Xiong Y."/>
            <person name="Iglesias P.A."/>
            <person name="Hoeller O."/>
            <person name="Bolourani P."/>
            <person name="Devreotes P.N."/>
        </authorList>
    </citation>
    <scope>FUNCTION</scope>
    <scope>DISRUPTION PHENOTYPE</scope>
</reference>
<dbReference type="EMBL" id="AF085194">
    <property type="protein sequence ID" value="AAC35553.1"/>
    <property type="molecule type" value="mRNA"/>
</dbReference>
<dbReference type="EMBL" id="AAFI02000020">
    <property type="protein sequence ID" value="EAL68662.1"/>
    <property type="molecule type" value="Genomic_DNA"/>
</dbReference>
<dbReference type="EMBL" id="AF080675">
    <property type="protein sequence ID" value="AAC31824.1"/>
    <property type="molecule type" value="Genomic_DNA"/>
</dbReference>
<dbReference type="PIR" id="JC5984">
    <property type="entry name" value="JC5984"/>
</dbReference>
<dbReference type="RefSeq" id="XP_642614.1">
    <property type="nucleotide sequence ID" value="XM_637522.1"/>
</dbReference>
<dbReference type="SMR" id="O77203"/>
<dbReference type="BioGRID" id="1246034">
    <property type="interactions" value="1"/>
</dbReference>
<dbReference type="FunCoup" id="O77203">
    <property type="interactions" value="351"/>
</dbReference>
<dbReference type="STRING" id="44689.O77203"/>
<dbReference type="PaxDb" id="44689-DDB0185055"/>
<dbReference type="EnsemblProtists" id="EAL68662">
    <property type="protein sequence ID" value="EAL68662"/>
    <property type="gene ID" value="DDB_G0277399"/>
</dbReference>
<dbReference type="GeneID" id="8621031"/>
<dbReference type="KEGG" id="ddi:DDB_G0277399"/>
<dbReference type="dictyBase" id="DDB_G0277399">
    <property type="gene designation" value="piaA"/>
</dbReference>
<dbReference type="VEuPathDB" id="AmoebaDB:DDB_G0277399"/>
<dbReference type="eggNOG" id="KOG3694">
    <property type="taxonomic scope" value="Eukaryota"/>
</dbReference>
<dbReference type="HOGENOM" id="CLU_001013_0_0_1"/>
<dbReference type="InParanoid" id="O77203"/>
<dbReference type="OMA" id="EIRIHAT"/>
<dbReference type="PhylomeDB" id="O77203"/>
<dbReference type="Reactome" id="R-DDI-1257604">
    <property type="pathway name" value="PIP3 activates AKT signaling"/>
</dbReference>
<dbReference type="Reactome" id="R-DDI-389357">
    <property type="pathway name" value="CD28 dependent PI3K/Akt signaling"/>
</dbReference>
<dbReference type="Reactome" id="R-DDI-5218920">
    <property type="pathway name" value="VEGFR2 mediated vascular permeability"/>
</dbReference>
<dbReference type="Reactome" id="R-DDI-6804757">
    <property type="pathway name" value="Regulation of TP53 Degradation"/>
</dbReference>
<dbReference type="Reactome" id="R-DDI-9856530">
    <property type="pathway name" value="High laminar flow shear stress activates signaling by PIEZO1 and PECAM1:CDH5:KDR in endothelial cells"/>
</dbReference>
<dbReference type="PRO" id="PR:O77203"/>
<dbReference type="Proteomes" id="UP000002195">
    <property type="component" value="Chromosome 2"/>
</dbReference>
<dbReference type="GO" id="GO:0005737">
    <property type="term" value="C:cytoplasm"/>
    <property type="evidence" value="ECO:0000314"/>
    <property type="project" value="dictyBase"/>
</dbReference>
<dbReference type="GO" id="GO:0005829">
    <property type="term" value="C:cytosol"/>
    <property type="evidence" value="ECO:0000314"/>
    <property type="project" value="dictyBase"/>
</dbReference>
<dbReference type="GO" id="GO:0031932">
    <property type="term" value="C:TORC2 complex"/>
    <property type="evidence" value="ECO:0000314"/>
    <property type="project" value="dictyBase"/>
</dbReference>
<dbReference type="GO" id="GO:0010856">
    <property type="term" value="F:adenylate cyclase activator activity"/>
    <property type="evidence" value="ECO:0000314"/>
    <property type="project" value="dictyBase"/>
</dbReference>
<dbReference type="GO" id="GO:0005085">
    <property type="term" value="F:guanyl-nucleotide exchange factor activity"/>
    <property type="evidence" value="ECO:0007669"/>
    <property type="project" value="UniProtKB-KW"/>
</dbReference>
<dbReference type="GO" id="GO:0031152">
    <property type="term" value="P:aggregation involved in sorocarp development"/>
    <property type="evidence" value="ECO:0000315"/>
    <property type="project" value="dictyBase"/>
</dbReference>
<dbReference type="GO" id="GO:0006935">
    <property type="term" value="P:chemotaxis"/>
    <property type="evidence" value="ECO:0000315"/>
    <property type="project" value="dictyBase"/>
</dbReference>
<dbReference type="GO" id="GO:0043327">
    <property type="term" value="P:chemotaxis to cAMP"/>
    <property type="evidence" value="ECO:0000316"/>
    <property type="project" value="dictyBase"/>
</dbReference>
<dbReference type="GO" id="GO:0030010">
    <property type="term" value="P:establishment of cell polarity"/>
    <property type="evidence" value="ECO:0000316"/>
    <property type="project" value="dictyBase"/>
</dbReference>
<dbReference type="GO" id="GO:0140986">
    <property type="term" value="P:G protein-coupled chemorepellent receptor signaling pathway"/>
    <property type="evidence" value="ECO:0000315"/>
    <property type="project" value="dictyBase"/>
</dbReference>
<dbReference type="GO" id="GO:0000281">
    <property type="term" value="P:mitotic cytokinesis"/>
    <property type="evidence" value="ECO:0000315"/>
    <property type="project" value="dictyBase"/>
</dbReference>
<dbReference type="GO" id="GO:1903665">
    <property type="term" value="P:negative regulation of asexual reproduction"/>
    <property type="evidence" value="ECO:0000315"/>
    <property type="project" value="dictyBase"/>
</dbReference>
<dbReference type="GO" id="GO:0050765">
    <property type="term" value="P:negative regulation of phagocytosis"/>
    <property type="evidence" value="ECO:0000315"/>
    <property type="project" value="dictyBase"/>
</dbReference>
<dbReference type="GO" id="GO:0046580">
    <property type="term" value="P:negative regulation of Ras protein signal transduction"/>
    <property type="evidence" value="ECO:0000315"/>
    <property type="project" value="dictyBase"/>
</dbReference>
<dbReference type="GO" id="GO:0051897">
    <property type="term" value="P:positive regulation of phosphatidylinositol 3-kinase/protein kinase B signal transduction"/>
    <property type="evidence" value="ECO:0000315"/>
    <property type="project" value="dictyBase"/>
</dbReference>
<dbReference type="GO" id="GO:0106070">
    <property type="term" value="P:regulation of adenylate cyclase-activating G protein-coupled receptor signaling pathway"/>
    <property type="evidence" value="ECO:0000316"/>
    <property type="project" value="dictyBase"/>
</dbReference>
<dbReference type="GO" id="GO:0043520">
    <property type="term" value="P:regulation of myosin II filament assembly"/>
    <property type="evidence" value="ECO:0000315"/>
    <property type="project" value="dictyBase"/>
</dbReference>
<dbReference type="GO" id="GO:0051896">
    <property type="term" value="P:regulation of phosphatidylinositol 3-kinase/protein kinase B signal transduction"/>
    <property type="evidence" value="ECO:0000316"/>
    <property type="project" value="dictyBase"/>
</dbReference>
<dbReference type="GO" id="GO:0051602">
    <property type="term" value="P:response to electrical stimulus"/>
    <property type="evidence" value="ECO:0000315"/>
    <property type="project" value="dictyBase"/>
</dbReference>
<dbReference type="GO" id="GO:0030587">
    <property type="term" value="P:sorocarp development"/>
    <property type="evidence" value="ECO:0007001"/>
    <property type="project" value="dictyBase"/>
</dbReference>
<dbReference type="GO" id="GO:0038203">
    <property type="term" value="P:TORC2 signaling"/>
    <property type="evidence" value="ECO:0000314"/>
    <property type="project" value="dictyBase"/>
</dbReference>
<dbReference type="InterPro" id="IPR016024">
    <property type="entry name" value="ARM-type_fold"/>
</dbReference>
<dbReference type="InterPro" id="IPR028268">
    <property type="entry name" value="Pianissimo_fam"/>
</dbReference>
<dbReference type="InterPro" id="IPR028267">
    <property type="entry name" value="Pianissimo_N"/>
</dbReference>
<dbReference type="InterPro" id="IPR029453">
    <property type="entry name" value="Rictor_IV"/>
</dbReference>
<dbReference type="InterPro" id="IPR029451">
    <property type="entry name" value="RICTOR_M"/>
</dbReference>
<dbReference type="InterPro" id="IPR029452">
    <property type="entry name" value="RICTOR_V"/>
</dbReference>
<dbReference type="PANTHER" id="PTHR13298">
    <property type="entry name" value="CYTOSOLIC REGULATOR PIANISSIMO"/>
    <property type="match status" value="1"/>
</dbReference>
<dbReference type="PANTHER" id="PTHR13298:SF11">
    <property type="entry name" value="RAPAMYCIN-INSENSITIVE COMPANION OF MTOR"/>
    <property type="match status" value="1"/>
</dbReference>
<dbReference type="Pfam" id="PF14663">
    <property type="entry name" value="RasGEF_N_2"/>
    <property type="match status" value="1"/>
</dbReference>
<dbReference type="Pfam" id="PF14666">
    <property type="entry name" value="RICTOR_M"/>
    <property type="match status" value="1"/>
</dbReference>
<dbReference type="Pfam" id="PF14664">
    <property type="entry name" value="RICTOR_N"/>
    <property type="match status" value="1"/>
</dbReference>
<dbReference type="Pfam" id="PF14668">
    <property type="entry name" value="RICTOR_V"/>
    <property type="match status" value="1"/>
</dbReference>
<dbReference type="SMART" id="SM01303">
    <property type="entry name" value="RasGEF_N_2"/>
    <property type="match status" value="1"/>
</dbReference>
<dbReference type="SMART" id="SM01307">
    <property type="entry name" value="RICTOR_M"/>
    <property type="match status" value="1"/>
</dbReference>
<dbReference type="SMART" id="SM01308">
    <property type="entry name" value="RICTOR_N"/>
    <property type="match status" value="1"/>
</dbReference>
<dbReference type="SMART" id="SM01310">
    <property type="entry name" value="RICTOR_V"/>
    <property type="match status" value="1"/>
</dbReference>
<dbReference type="SUPFAM" id="SSF48371">
    <property type="entry name" value="ARM repeat"/>
    <property type="match status" value="1"/>
</dbReference>